<gene>
    <name evidence="1" type="primary">hspQ</name>
    <name type="ordered locus">SPA1771</name>
</gene>
<sequence>MIASKFGIGQQVRHSLLGYLGVVVDIDPEYSLDEPSPDELAVNDELRAAPWYHVVMEDDNGQPVHTYLAEAQLRSEMRDEHPEQPSMDELARTIRKQLQAPRLRN</sequence>
<feature type="chain" id="PRO_0000315310" description="Heat shock protein HspQ">
    <location>
        <begin position="1"/>
        <end position="105"/>
    </location>
</feature>
<feature type="region of interest" description="Disordered" evidence="2">
    <location>
        <begin position="77"/>
        <end position="105"/>
    </location>
</feature>
<evidence type="ECO:0000255" key="1">
    <source>
        <dbReference type="HAMAP-Rule" id="MF_01194"/>
    </source>
</evidence>
<evidence type="ECO:0000256" key="2">
    <source>
        <dbReference type="SAM" id="MobiDB-lite"/>
    </source>
</evidence>
<proteinExistence type="inferred from homology"/>
<accession>Q5PGB5</accession>
<keyword id="KW-0963">Cytoplasm</keyword>
<keyword id="KW-0346">Stress response</keyword>
<reference key="1">
    <citation type="journal article" date="2004" name="Nat. Genet.">
        <title>Comparison of genome degradation in Paratyphi A and Typhi, human-restricted serovars of Salmonella enterica that cause typhoid.</title>
        <authorList>
            <person name="McClelland M."/>
            <person name="Sanderson K.E."/>
            <person name="Clifton S.W."/>
            <person name="Latreille P."/>
            <person name="Porwollik S."/>
            <person name="Sabo A."/>
            <person name="Meyer R."/>
            <person name="Bieri T."/>
            <person name="Ozersky P."/>
            <person name="McLellan M."/>
            <person name="Harkins C.R."/>
            <person name="Wang C."/>
            <person name="Nguyen C."/>
            <person name="Berghoff A."/>
            <person name="Elliott G."/>
            <person name="Kohlberg S."/>
            <person name="Strong C."/>
            <person name="Du F."/>
            <person name="Carter J."/>
            <person name="Kremizki C."/>
            <person name="Layman D."/>
            <person name="Leonard S."/>
            <person name="Sun H."/>
            <person name="Fulton L."/>
            <person name="Nash W."/>
            <person name="Miner T."/>
            <person name="Minx P."/>
            <person name="Delehaunty K."/>
            <person name="Fronick C."/>
            <person name="Magrini V."/>
            <person name="Nhan M."/>
            <person name="Warren W."/>
            <person name="Florea L."/>
            <person name="Spieth J."/>
            <person name="Wilson R.K."/>
        </authorList>
    </citation>
    <scope>NUCLEOTIDE SEQUENCE [LARGE SCALE GENOMIC DNA]</scope>
    <source>
        <strain>ATCC 9150 / SARB42</strain>
    </source>
</reference>
<protein>
    <recommendedName>
        <fullName evidence="1">Heat shock protein HspQ</fullName>
    </recommendedName>
</protein>
<dbReference type="EMBL" id="CP000026">
    <property type="protein sequence ID" value="AAV77687.1"/>
    <property type="molecule type" value="Genomic_DNA"/>
</dbReference>
<dbReference type="RefSeq" id="WP_000561984.1">
    <property type="nucleotide sequence ID" value="NC_006511.1"/>
</dbReference>
<dbReference type="SMR" id="Q5PGB5"/>
<dbReference type="KEGG" id="spt:SPA1771"/>
<dbReference type="HOGENOM" id="CLU_123865_1_0_6"/>
<dbReference type="Proteomes" id="UP000008185">
    <property type="component" value="Chromosome"/>
</dbReference>
<dbReference type="GO" id="GO:0005737">
    <property type="term" value="C:cytoplasm"/>
    <property type="evidence" value="ECO:0007669"/>
    <property type="project" value="UniProtKB-SubCell"/>
</dbReference>
<dbReference type="GO" id="GO:0003677">
    <property type="term" value="F:DNA binding"/>
    <property type="evidence" value="ECO:0007669"/>
    <property type="project" value="InterPro"/>
</dbReference>
<dbReference type="GO" id="GO:0009408">
    <property type="term" value="P:response to heat"/>
    <property type="evidence" value="ECO:0007669"/>
    <property type="project" value="UniProtKB-UniRule"/>
</dbReference>
<dbReference type="Gene3D" id="2.30.30.390">
    <property type="entry name" value="Hemimethylated DNA-binding domain"/>
    <property type="match status" value="1"/>
</dbReference>
<dbReference type="HAMAP" id="MF_01194">
    <property type="entry name" value="HspQ"/>
    <property type="match status" value="1"/>
</dbReference>
<dbReference type="InterPro" id="IPR011722">
    <property type="entry name" value="Hemimethylated_DNA-bd_dom"/>
</dbReference>
<dbReference type="InterPro" id="IPR036623">
    <property type="entry name" value="Hemimethylated_DNA-bd_sf"/>
</dbReference>
<dbReference type="InterPro" id="IPR022866">
    <property type="entry name" value="HspQ"/>
</dbReference>
<dbReference type="NCBIfam" id="NF010729">
    <property type="entry name" value="PRK14129.1"/>
    <property type="match status" value="1"/>
</dbReference>
<dbReference type="NCBIfam" id="TIGR02097">
    <property type="entry name" value="yccV"/>
    <property type="match status" value="1"/>
</dbReference>
<dbReference type="Pfam" id="PF08755">
    <property type="entry name" value="YccV-like"/>
    <property type="match status" value="1"/>
</dbReference>
<dbReference type="SMART" id="SM00992">
    <property type="entry name" value="YccV-like"/>
    <property type="match status" value="1"/>
</dbReference>
<dbReference type="SUPFAM" id="SSF141255">
    <property type="entry name" value="YccV-like"/>
    <property type="match status" value="1"/>
</dbReference>
<organism>
    <name type="scientific">Salmonella paratyphi A (strain ATCC 9150 / SARB42)</name>
    <dbReference type="NCBI Taxonomy" id="295319"/>
    <lineage>
        <taxon>Bacteria</taxon>
        <taxon>Pseudomonadati</taxon>
        <taxon>Pseudomonadota</taxon>
        <taxon>Gammaproteobacteria</taxon>
        <taxon>Enterobacterales</taxon>
        <taxon>Enterobacteriaceae</taxon>
        <taxon>Salmonella</taxon>
    </lineage>
</organism>
<comment type="function">
    <text evidence="1">Involved in the degradation of certain denaturated proteins, including DnaA, during heat shock stress.</text>
</comment>
<comment type="subcellular location">
    <subcellularLocation>
        <location evidence="1">Cytoplasm</location>
    </subcellularLocation>
</comment>
<comment type="similarity">
    <text evidence="1">Belongs to the HspQ family.</text>
</comment>
<name>HSPQ_SALPA</name>